<organism>
    <name type="scientific">Corynebacterium jeikeium (strain K411)</name>
    <dbReference type="NCBI Taxonomy" id="306537"/>
    <lineage>
        <taxon>Bacteria</taxon>
        <taxon>Bacillati</taxon>
        <taxon>Actinomycetota</taxon>
        <taxon>Actinomycetes</taxon>
        <taxon>Mycobacteriales</taxon>
        <taxon>Corynebacteriaceae</taxon>
        <taxon>Corynebacterium</taxon>
    </lineage>
</organism>
<comment type="function">
    <text evidence="1">Catalyzes the attachment of valine to tRNA(Val). As ValRS can inadvertently accommodate and process structurally similar amino acids such as threonine, to avoid such errors, it has a 'posttransfer' editing activity that hydrolyzes mischarged Thr-tRNA(Val) in a tRNA-dependent manner.</text>
</comment>
<comment type="catalytic activity">
    <reaction evidence="1">
        <text>tRNA(Val) + L-valine + ATP = L-valyl-tRNA(Val) + AMP + diphosphate</text>
        <dbReference type="Rhea" id="RHEA:10704"/>
        <dbReference type="Rhea" id="RHEA-COMP:9672"/>
        <dbReference type="Rhea" id="RHEA-COMP:9708"/>
        <dbReference type="ChEBI" id="CHEBI:30616"/>
        <dbReference type="ChEBI" id="CHEBI:33019"/>
        <dbReference type="ChEBI" id="CHEBI:57762"/>
        <dbReference type="ChEBI" id="CHEBI:78442"/>
        <dbReference type="ChEBI" id="CHEBI:78537"/>
        <dbReference type="ChEBI" id="CHEBI:456215"/>
        <dbReference type="EC" id="6.1.1.9"/>
    </reaction>
</comment>
<comment type="subunit">
    <text evidence="1">Monomer.</text>
</comment>
<comment type="subcellular location">
    <subcellularLocation>
        <location evidence="1">Cytoplasm</location>
    </subcellularLocation>
</comment>
<comment type="domain">
    <text evidence="1">ValRS has two distinct active sites: one for aminoacylation and one for editing. The misactivated threonine is translocated from the active site to the editing site.</text>
</comment>
<comment type="domain">
    <text evidence="1">The C-terminal coiled-coil domain is crucial for aminoacylation activity.</text>
</comment>
<comment type="similarity">
    <text evidence="1">Belongs to the class-I aminoacyl-tRNA synthetase family. ValS type 1 subfamily.</text>
</comment>
<gene>
    <name evidence="1" type="primary">valS</name>
    <name type="ordered locus">jk0550</name>
</gene>
<protein>
    <recommendedName>
        <fullName evidence="1">Valine--tRNA ligase</fullName>
        <ecNumber evidence="1">6.1.1.9</ecNumber>
    </recommendedName>
    <alternativeName>
        <fullName evidence="1">Valyl-tRNA synthetase</fullName>
        <shortName evidence="1">ValRS</shortName>
    </alternativeName>
</protein>
<evidence type="ECO:0000255" key="1">
    <source>
        <dbReference type="HAMAP-Rule" id="MF_02004"/>
    </source>
</evidence>
<reference key="1">
    <citation type="journal article" date="2005" name="J. Bacteriol.">
        <title>Complete genome sequence and analysis of the multiresistant nosocomial pathogen Corynebacterium jeikeium K411, a lipid-requiring bacterium of the human skin flora.</title>
        <authorList>
            <person name="Tauch A."/>
            <person name="Kaiser O."/>
            <person name="Hain T."/>
            <person name="Goesmann A."/>
            <person name="Weisshaar B."/>
            <person name="Albersmeier A."/>
            <person name="Bekel T."/>
            <person name="Bischoff N."/>
            <person name="Brune I."/>
            <person name="Chakraborty T."/>
            <person name="Kalinowski J."/>
            <person name="Meyer F."/>
            <person name="Rupp O."/>
            <person name="Schneiker S."/>
            <person name="Viehoever P."/>
            <person name="Puehler A."/>
        </authorList>
    </citation>
    <scope>NUCLEOTIDE SEQUENCE [LARGE SCALE GENOMIC DNA]</scope>
    <source>
        <strain>K411</strain>
    </source>
</reference>
<accession>Q4JWU8</accession>
<keyword id="KW-0030">Aminoacyl-tRNA synthetase</keyword>
<keyword id="KW-0067">ATP-binding</keyword>
<keyword id="KW-0175">Coiled coil</keyword>
<keyword id="KW-0963">Cytoplasm</keyword>
<keyword id="KW-0436">Ligase</keyword>
<keyword id="KW-0547">Nucleotide-binding</keyword>
<keyword id="KW-0648">Protein biosynthesis</keyword>
<keyword id="KW-1185">Reference proteome</keyword>
<dbReference type="EC" id="6.1.1.9" evidence="1"/>
<dbReference type="EMBL" id="CR931997">
    <property type="protein sequence ID" value="CAI36709.1"/>
    <property type="molecule type" value="Genomic_DNA"/>
</dbReference>
<dbReference type="RefSeq" id="WP_011273214.1">
    <property type="nucleotide sequence ID" value="NC_007164.1"/>
</dbReference>
<dbReference type="SMR" id="Q4JWU8"/>
<dbReference type="STRING" id="306537.jk0550"/>
<dbReference type="KEGG" id="cjk:jk0550"/>
<dbReference type="PATRIC" id="fig|306537.10.peg.562"/>
<dbReference type="eggNOG" id="COG0525">
    <property type="taxonomic scope" value="Bacteria"/>
</dbReference>
<dbReference type="HOGENOM" id="CLU_001493_0_2_11"/>
<dbReference type="OrthoDB" id="9810365at2"/>
<dbReference type="Proteomes" id="UP000000545">
    <property type="component" value="Chromosome"/>
</dbReference>
<dbReference type="GO" id="GO:0005829">
    <property type="term" value="C:cytosol"/>
    <property type="evidence" value="ECO:0007669"/>
    <property type="project" value="TreeGrafter"/>
</dbReference>
<dbReference type="GO" id="GO:0002161">
    <property type="term" value="F:aminoacyl-tRNA deacylase activity"/>
    <property type="evidence" value="ECO:0007669"/>
    <property type="project" value="InterPro"/>
</dbReference>
<dbReference type="GO" id="GO:0005524">
    <property type="term" value="F:ATP binding"/>
    <property type="evidence" value="ECO:0007669"/>
    <property type="project" value="UniProtKB-UniRule"/>
</dbReference>
<dbReference type="GO" id="GO:0004832">
    <property type="term" value="F:valine-tRNA ligase activity"/>
    <property type="evidence" value="ECO:0007669"/>
    <property type="project" value="UniProtKB-UniRule"/>
</dbReference>
<dbReference type="GO" id="GO:0006438">
    <property type="term" value="P:valyl-tRNA aminoacylation"/>
    <property type="evidence" value="ECO:0007669"/>
    <property type="project" value="UniProtKB-UniRule"/>
</dbReference>
<dbReference type="CDD" id="cd07962">
    <property type="entry name" value="Anticodon_Ia_Val"/>
    <property type="match status" value="1"/>
</dbReference>
<dbReference type="CDD" id="cd00817">
    <property type="entry name" value="ValRS_core"/>
    <property type="match status" value="1"/>
</dbReference>
<dbReference type="FunFam" id="1.10.287.380:FF:000001">
    <property type="entry name" value="Valine--tRNA ligase"/>
    <property type="match status" value="1"/>
</dbReference>
<dbReference type="FunFam" id="3.40.50.620:FF:000032">
    <property type="entry name" value="Valine--tRNA ligase"/>
    <property type="match status" value="1"/>
</dbReference>
<dbReference type="FunFam" id="3.40.50.620:FF:000098">
    <property type="entry name" value="Valine--tRNA ligase"/>
    <property type="match status" value="1"/>
</dbReference>
<dbReference type="FunFam" id="3.90.740.10:FF:000005">
    <property type="entry name" value="Valine--tRNA ligase, mitochondrial"/>
    <property type="match status" value="1"/>
</dbReference>
<dbReference type="Gene3D" id="3.40.50.620">
    <property type="entry name" value="HUPs"/>
    <property type="match status" value="3"/>
</dbReference>
<dbReference type="Gene3D" id="1.10.730.10">
    <property type="entry name" value="Isoleucyl-tRNA Synthetase, Domain 1"/>
    <property type="match status" value="1"/>
</dbReference>
<dbReference type="Gene3D" id="1.10.287.380">
    <property type="entry name" value="Valyl-tRNA synthetase, C-terminal domain"/>
    <property type="match status" value="1"/>
</dbReference>
<dbReference type="Gene3D" id="3.90.740.10">
    <property type="entry name" value="Valyl/Leucyl/Isoleucyl-tRNA synthetase, editing domain"/>
    <property type="match status" value="1"/>
</dbReference>
<dbReference type="HAMAP" id="MF_02004">
    <property type="entry name" value="Val_tRNA_synth_type1"/>
    <property type="match status" value="1"/>
</dbReference>
<dbReference type="InterPro" id="IPR001412">
    <property type="entry name" value="aa-tRNA-synth_I_CS"/>
</dbReference>
<dbReference type="InterPro" id="IPR002300">
    <property type="entry name" value="aa-tRNA-synth_Ia"/>
</dbReference>
<dbReference type="InterPro" id="IPR033705">
    <property type="entry name" value="Anticodon_Ia_Val"/>
</dbReference>
<dbReference type="InterPro" id="IPR013155">
    <property type="entry name" value="M/V/L/I-tRNA-synth_anticd-bd"/>
</dbReference>
<dbReference type="InterPro" id="IPR014729">
    <property type="entry name" value="Rossmann-like_a/b/a_fold"/>
</dbReference>
<dbReference type="InterPro" id="IPR010978">
    <property type="entry name" value="tRNA-bd_arm"/>
</dbReference>
<dbReference type="InterPro" id="IPR009080">
    <property type="entry name" value="tRNAsynth_Ia_anticodon-bd"/>
</dbReference>
<dbReference type="InterPro" id="IPR037118">
    <property type="entry name" value="Val-tRNA_synth_C_sf"/>
</dbReference>
<dbReference type="InterPro" id="IPR019499">
    <property type="entry name" value="Val-tRNA_synth_tRNA-bd"/>
</dbReference>
<dbReference type="InterPro" id="IPR009008">
    <property type="entry name" value="Val/Leu/Ile-tRNA-synth_edit"/>
</dbReference>
<dbReference type="InterPro" id="IPR002303">
    <property type="entry name" value="Valyl-tRNA_ligase"/>
</dbReference>
<dbReference type="NCBIfam" id="NF004349">
    <property type="entry name" value="PRK05729.1"/>
    <property type="match status" value="1"/>
</dbReference>
<dbReference type="NCBIfam" id="TIGR00422">
    <property type="entry name" value="valS"/>
    <property type="match status" value="1"/>
</dbReference>
<dbReference type="PANTHER" id="PTHR11946:SF93">
    <property type="entry name" value="VALINE--TRNA LIGASE, CHLOROPLASTIC_MITOCHONDRIAL 2"/>
    <property type="match status" value="1"/>
</dbReference>
<dbReference type="PANTHER" id="PTHR11946">
    <property type="entry name" value="VALYL-TRNA SYNTHETASES"/>
    <property type="match status" value="1"/>
</dbReference>
<dbReference type="Pfam" id="PF08264">
    <property type="entry name" value="Anticodon_1"/>
    <property type="match status" value="1"/>
</dbReference>
<dbReference type="Pfam" id="PF00133">
    <property type="entry name" value="tRNA-synt_1"/>
    <property type="match status" value="2"/>
</dbReference>
<dbReference type="Pfam" id="PF10458">
    <property type="entry name" value="Val_tRNA-synt_C"/>
    <property type="match status" value="1"/>
</dbReference>
<dbReference type="PRINTS" id="PR00986">
    <property type="entry name" value="TRNASYNTHVAL"/>
</dbReference>
<dbReference type="SUPFAM" id="SSF47323">
    <property type="entry name" value="Anticodon-binding domain of a subclass of class I aminoacyl-tRNA synthetases"/>
    <property type="match status" value="1"/>
</dbReference>
<dbReference type="SUPFAM" id="SSF52374">
    <property type="entry name" value="Nucleotidylyl transferase"/>
    <property type="match status" value="1"/>
</dbReference>
<dbReference type="SUPFAM" id="SSF46589">
    <property type="entry name" value="tRNA-binding arm"/>
    <property type="match status" value="1"/>
</dbReference>
<dbReference type="SUPFAM" id="SSF50677">
    <property type="entry name" value="ValRS/IleRS/LeuRS editing domain"/>
    <property type="match status" value="1"/>
</dbReference>
<dbReference type="PROSITE" id="PS00178">
    <property type="entry name" value="AA_TRNA_LIGASE_I"/>
    <property type="match status" value="1"/>
</dbReference>
<sequence>MPCLARLLDLADVSDSSSKANGSNPIGADRSAQLPAAWDPAAVEENLYQGWVDSGYFKADPSSDKPPFSIVLPPPNVTGQLHMGHALDHTLMDAMARRKRMQGFEVLWLPGSDHAGIATQTKVEANLKETEGKDRFDYGRDAFVGKVWEWKDRYGGVIQRQMRAIGDSVDWSRERFTLDDGLSRAVQTMFKELFDAGLIYRANRMVNWSPVLQTAISDIEVVYSDDEGELVSIRYGSLEDSEPHVVVATTRVETMLGDVAVAVHPEDERYTDLVGKSLPHPFLPDRQMIVVADDYVDPEFGTGAVKITPAHDPNDFAMGQRHDLPMPVIMDETGHIANTGTEFDGMERYEAREKIRLALEEQGRIVARKFPYVHSVGHSERSKEAVEPRLSEQWFVKVEELAKMSGDAIRSGDSVIHPSSQEPRWFDWVDDMHDWCISRQLWWGHRIPIWYGPNGEIVCCGPDDEAPTGEGWYQDEDVLDTWFSSALWPFSTMGWPEKTPELEKFYPTSVLVTGYDILFFWVARMMMFATFASKHTPEILGTGKDGRPQIPFNDIFLHGLVRDEHGRKMSKSLGNGIDPMDWVRDYGADALRFTLARGANPGSDLPVGEDAAQSSRNFATKLYNATKFALMNGARVGELPARETLTDADRWILDRLEEVRQLVDDALDRYEFSLANENLYRFAWGEFCDWYLEIAKVQIPRDWDSATEEQVQRGIRTQIVLGRVLDSVLRLLHPAMPFVTETLWKALTDGEEGYSESLVTADWPTADLTNGGAQTDADAVRRMADVDKLVTELRRFRSDQGVKPSQKVPAKLDFAAADLANFEEAVRSLVRLETPEEDFAETASIEVRLSQATIAVQLDTSGTVDVAAERKRLEKDLAAAQKELDNAAKKLGNENFLAKAPEKVVEGIRERQRVAQEEFERITARLEGLPKA</sequence>
<name>SYV_CORJK</name>
<feature type="chain" id="PRO_0000224468" description="Valine--tRNA ligase">
    <location>
        <begin position="1"/>
        <end position="932"/>
    </location>
</feature>
<feature type="coiled-coil region" evidence="1">
    <location>
        <begin position="863"/>
        <end position="929"/>
    </location>
</feature>
<feature type="short sequence motif" description="'HIGH' region">
    <location>
        <begin position="75"/>
        <end position="85"/>
    </location>
</feature>
<feature type="short sequence motif" description="'KMSKS' region">
    <location>
        <begin position="568"/>
        <end position="572"/>
    </location>
</feature>
<feature type="binding site" evidence="1">
    <location>
        <position position="571"/>
    </location>
    <ligand>
        <name>ATP</name>
        <dbReference type="ChEBI" id="CHEBI:30616"/>
    </ligand>
</feature>
<proteinExistence type="inferred from homology"/>